<name>COX2_AEDAE</name>
<accession>P50692</accession>
<accession>B0FWC8</accession>
<evidence type="ECO:0000250" key="1">
    <source>
        <dbReference type="UniProtKB" id="P00410"/>
    </source>
</evidence>
<evidence type="ECO:0000255" key="2"/>
<evidence type="ECO:0000305" key="3"/>
<geneLocation type="mitochondrion"/>
<organism>
    <name type="scientific">Aedes aegypti</name>
    <name type="common">Yellowfever mosquito</name>
    <name type="synonym">Culex aegypti</name>
    <dbReference type="NCBI Taxonomy" id="7159"/>
    <lineage>
        <taxon>Eukaryota</taxon>
        <taxon>Metazoa</taxon>
        <taxon>Ecdysozoa</taxon>
        <taxon>Arthropoda</taxon>
        <taxon>Hexapoda</taxon>
        <taxon>Insecta</taxon>
        <taxon>Pterygota</taxon>
        <taxon>Neoptera</taxon>
        <taxon>Endopterygota</taxon>
        <taxon>Diptera</taxon>
        <taxon>Nematocera</taxon>
        <taxon>Culicoidea</taxon>
        <taxon>Culicidae</taxon>
        <taxon>Culicinae</taxon>
        <taxon>Aedini</taxon>
        <taxon>Aedes</taxon>
        <taxon>Stegomyia</taxon>
    </lineage>
</organism>
<comment type="function">
    <text evidence="1">Component of the cytochrome c oxidase, the last enzyme in the mitochondrial electron transport chain which drives oxidative phosphorylation. The respiratory chain contains 3 multisubunit complexes succinate dehydrogenase (complex II, CII), ubiquinol-cytochrome c oxidoreductase (cytochrome b-c1 complex, complex III, CIII) and cytochrome c oxidase (complex IV, CIV), that cooperate to transfer electrons derived from NADH and succinate to molecular oxygen, creating an electrochemical gradient over the inner membrane that drives transmembrane transport and the ATP synthase. Cytochrome c oxidase is the component of the respiratory chain that catalyzes the reduction of oxygen to water. Electrons originating from reduced cytochrome c in the intermembrane space (IMS) are transferred via the dinuclear copper A center (CU(A)) of subunit 2 and heme A of subunit 1 to the active site in subunit 1, a binuclear center (BNC) formed by heme A3 and copper B (CU(B)). The BNC reduces molecular oxygen to 2 water molecules using 4 electrons from cytochrome c in the IMS and 4 protons from the mitochondrial matrix.</text>
</comment>
<comment type="catalytic activity">
    <reaction evidence="1">
        <text>4 Fe(II)-[cytochrome c] + O2 + 8 H(+)(in) = 4 Fe(III)-[cytochrome c] + 2 H2O + 4 H(+)(out)</text>
        <dbReference type="Rhea" id="RHEA:11436"/>
        <dbReference type="Rhea" id="RHEA-COMP:10350"/>
        <dbReference type="Rhea" id="RHEA-COMP:14399"/>
        <dbReference type="ChEBI" id="CHEBI:15377"/>
        <dbReference type="ChEBI" id="CHEBI:15378"/>
        <dbReference type="ChEBI" id="CHEBI:15379"/>
        <dbReference type="ChEBI" id="CHEBI:29033"/>
        <dbReference type="ChEBI" id="CHEBI:29034"/>
        <dbReference type="EC" id="7.1.1.9"/>
    </reaction>
    <physiologicalReaction direction="left-to-right" evidence="1">
        <dbReference type="Rhea" id="RHEA:11437"/>
    </physiologicalReaction>
</comment>
<comment type="cofactor">
    <cofactor evidence="1">
        <name>Cu cation</name>
        <dbReference type="ChEBI" id="CHEBI:23378"/>
    </cofactor>
    <text evidence="1">Binds a dinuclear copper A center per subunit.</text>
</comment>
<comment type="subunit">
    <text evidence="1">Component of the cytochrome c oxidase (complex IV, CIV), a multisubunit enzyme composed of a catalytic core of 3 subunits and several supernumerary subunits. The complex exists as a monomer or a dimer and forms supercomplexes (SCs) in the inner mitochondrial membrane with ubiquinol-cytochrome c oxidoreductase (cytochrome b-c1 complex, complex III, CIII).</text>
</comment>
<comment type="subcellular location">
    <subcellularLocation>
        <location evidence="1">Mitochondrion inner membrane</location>
        <topology evidence="1">Multi-pass membrane protein</topology>
    </subcellularLocation>
</comment>
<comment type="similarity">
    <text evidence="3">Belongs to the cytochrome c oxidase subunit 2 family.</text>
</comment>
<keyword id="KW-0186">Copper</keyword>
<keyword id="KW-0249">Electron transport</keyword>
<keyword id="KW-0460">Magnesium</keyword>
<keyword id="KW-0472">Membrane</keyword>
<keyword id="KW-0479">Metal-binding</keyword>
<keyword id="KW-0496">Mitochondrion</keyword>
<keyword id="KW-0999">Mitochondrion inner membrane</keyword>
<keyword id="KW-1185">Reference proteome</keyword>
<keyword id="KW-0679">Respiratory chain</keyword>
<keyword id="KW-1278">Translocase</keyword>
<keyword id="KW-0812">Transmembrane</keyword>
<keyword id="KW-1133">Transmembrane helix</keyword>
<keyword id="KW-0813">Transport</keyword>
<protein>
    <recommendedName>
        <fullName>Cytochrome c oxidase subunit 2</fullName>
        <ecNumber>7.1.1.9</ecNumber>
    </recommendedName>
    <alternativeName>
        <fullName>Cytochrome c oxidase polypeptide II</fullName>
    </alternativeName>
</protein>
<sequence>MATWANLGLQNSSSPLMEQLNFFHDHTLLILIMITVMIAYIMFMLFFNKFTNRYLLHGQTIEIIWTILPAIILMFIAFPSLRLLYLMDEINSPLITLKVIGHQWYWSYEYSNFLNLEFDSYMIPTNELDLNGFRLLDVDNRIILPMNNQIRILVTATDVLHSWTVPSLGVKIDATPGRLNQTNFLINQPGLFFGQCSEICGANHSFMPIVVESIPMNYFIKWISSQMN</sequence>
<gene>
    <name type="primary">COII</name>
    <name type="synonym">COX2</name>
</gene>
<feature type="chain" id="PRO_0000183486" description="Cytochrome c oxidase subunit 2">
    <location>
        <begin position="1"/>
        <end position="228"/>
    </location>
</feature>
<feature type="topological domain" description="Mitochondrial intermembrane" evidence="2">
    <location>
        <begin position="1"/>
        <end position="26"/>
    </location>
</feature>
<feature type="transmembrane region" description="Helical" evidence="2">
    <location>
        <begin position="27"/>
        <end position="48"/>
    </location>
</feature>
<feature type="topological domain" description="Mitochondrial matrix" evidence="2">
    <location>
        <begin position="49"/>
        <end position="62"/>
    </location>
</feature>
<feature type="transmembrane region" description="Helical" evidence="2">
    <location>
        <begin position="63"/>
        <end position="82"/>
    </location>
</feature>
<feature type="topological domain" description="Mitochondrial intermembrane" evidence="2">
    <location>
        <begin position="83"/>
        <end position="228"/>
    </location>
</feature>
<feature type="binding site" evidence="1">
    <location>
        <position position="161"/>
    </location>
    <ligand>
        <name>Cu cation</name>
        <dbReference type="ChEBI" id="CHEBI:23378"/>
        <label>A1</label>
    </ligand>
</feature>
<feature type="binding site" evidence="1">
    <location>
        <position position="196"/>
    </location>
    <ligand>
        <name>Cu cation</name>
        <dbReference type="ChEBI" id="CHEBI:23378"/>
        <label>A1</label>
    </ligand>
</feature>
<feature type="binding site" evidence="1">
    <location>
        <position position="196"/>
    </location>
    <ligand>
        <name>Cu cation</name>
        <dbReference type="ChEBI" id="CHEBI:23378"/>
        <label>A2</label>
    </ligand>
</feature>
<feature type="binding site" evidence="1">
    <location>
        <position position="198"/>
    </location>
    <ligand>
        <name>Cu cation</name>
        <dbReference type="ChEBI" id="CHEBI:23378"/>
        <label>A2</label>
    </ligand>
</feature>
<feature type="binding site" evidence="1">
    <location>
        <position position="198"/>
    </location>
    <ligand>
        <name>Mg(2+)</name>
        <dbReference type="ChEBI" id="CHEBI:18420"/>
        <note>ligand shared with subunit 1</note>
    </ligand>
</feature>
<feature type="binding site" evidence="1">
    <location>
        <position position="200"/>
    </location>
    <ligand>
        <name>Cu cation</name>
        <dbReference type="ChEBI" id="CHEBI:23378"/>
        <label>A1</label>
    </ligand>
</feature>
<feature type="binding site" evidence="1">
    <location>
        <position position="200"/>
    </location>
    <ligand>
        <name>Cu cation</name>
        <dbReference type="ChEBI" id="CHEBI:23378"/>
        <label>A2</label>
    </ligand>
</feature>
<feature type="binding site" evidence="1">
    <location>
        <position position="204"/>
    </location>
    <ligand>
        <name>Cu cation</name>
        <dbReference type="ChEBI" id="CHEBI:23378"/>
        <label>A2</label>
    </ligand>
</feature>
<feature type="binding site" evidence="1">
    <location>
        <position position="207"/>
    </location>
    <ligand>
        <name>Cu cation</name>
        <dbReference type="ChEBI" id="CHEBI:23378"/>
        <label>A1</label>
    </ligand>
</feature>
<feature type="sequence conflict" description="In Ref. 2; ABY51625." evidence="3" ref="2">
    <original>I</original>
    <variation>M</variation>
    <location>
        <position position="186"/>
    </location>
</feature>
<reference key="1">
    <citation type="journal article" date="1995" name="J. Med. Entomol.">
        <title>Gene for cytochrome c oxidase subunit II in the mitochondrial DNA of Culex quinquefasciatus and Aedes aegypti (Diptera: Culicidae).</title>
        <authorList>
            <person name="Ho C.M."/>
            <person name="Liu Y.M."/>
            <person name="Wei Y.H."/>
            <person name="Hu S.T."/>
        </authorList>
    </citation>
    <scope>NUCLEOTIDE SEQUENCE [GENOMIC DNA]</scope>
    <source>
        <strain>Koashiung</strain>
    </source>
</reference>
<reference key="2">
    <citation type="submission" date="2007-12" db="EMBL/GenBank/DDBJ databases">
        <title>The mitochondrial genome of the Yellow fever mosquito - Aedes aegypti.</title>
        <authorList>
            <person name="Lobo N.F."/>
            <person name="Lovin D."/>
            <person name="DeBruyn B."/>
            <person name="Puiu D."/>
            <person name="Shumway M."/>
            <person name="Haas B."/>
            <person name="Nene V."/>
            <person name="Severson D.W."/>
        </authorList>
    </citation>
    <scope>NUCLEOTIDE SEQUENCE [LARGE SCALE GENOMIC DNA]</scope>
    <source>
        <strain>LVPib12</strain>
    </source>
</reference>
<proteinExistence type="inferred from homology"/>
<dbReference type="EC" id="7.1.1.9"/>
<dbReference type="EMBL" id="L34412">
    <property type="protein sequence ID" value="AAA79168.1"/>
    <property type="molecule type" value="Genomic_DNA"/>
</dbReference>
<dbReference type="EMBL" id="EU352212">
    <property type="protein sequence ID" value="ABY51625.1"/>
    <property type="molecule type" value="Genomic_DNA"/>
</dbReference>
<dbReference type="RefSeq" id="YP_001649164.1">
    <property type="nucleotide sequence ID" value="NC_010241.1"/>
</dbReference>
<dbReference type="SMR" id="P50692"/>
<dbReference type="FunCoup" id="P50692">
    <property type="interactions" value="130"/>
</dbReference>
<dbReference type="STRING" id="7159.P50692"/>
<dbReference type="PaxDb" id="7159-AAEL018664-PA"/>
<dbReference type="VEuPathDB" id="VectorBase:AAEL018664"/>
<dbReference type="eggNOG" id="KOG4767">
    <property type="taxonomic scope" value="Eukaryota"/>
</dbReference>
<dbReference type="HOGENOM" id="CLU_036876_2_3_1"/>
<dbReference type="InParanoid" id="P50692"/>
<dbReference type="Proteomes" id="UP000008820">
    <property type="component" value="Mitochondrion MT"/>
</dbReference>
<dbReference type="Proteomes" id="UP000008820">
    <property type="component" value="Unassembled WGS sequence"/>
</dbReference>
<dbReference type="Proteomes" id="UP000682892">
    <property type="component" value="Mitochondrion MT"/>
</dbReference>
<dbReference type="GO" id="GO:0005743">
    <property type="term" value="C:mitochondrial inner membrane"/>
    <property type="evidence" value="ECO:0007669"/>
    <property type="project" value="UniProtKB-SubCell"/>
</dbReference>
<dbReference type="GO" id="GO:0005507">
    <property type="term" value="F:copper ion binding"/>
    <property type="evidence" value="ECO:0007669"/>
    <property type="project" value="InterPro"/>
</dbReference>
<dbReference type="GO" id="GO:0004129">
    <property type="term" value="F:cytochrome-c oxidase activity"/>
    <property type="evidence" value="ECO:0007669"/>
    <property type="project" value="UniProtKB-EC"/>
</dbReference>
<dbReference type="GO" id="GO:0042773">
    <property type="term" value="P:ATP synthesis coupled electron transport"/>
    <property type="evidence" value="ECO:0007669"/>
    <property type="project" value="TreeGrafter"/>
</dbReference>
<dbReference type="CDD" id="cd13912">
    <property type="entry name" value="CcO_II_C"/>
    <property type="match status" value="1"/>
</dbReference>
<dbReference type="FunFam" id="1.10.287.90:FF:000006">
    <property type="entry name" value="Cytochrome c oxidase subunit 2"/>
    <property type="match status" value="1"/>
</dbReference>
<dbReference type="FunFam" id="2.60.40.420:FF:000001">
    <property type="entry name" value="Cytochrome c oxidase subunit 2"/>
    <property type="match status" value="1"/>
</dbReference>
<dbReference type="Gene3D" id="1.10.287.90">
    <property type="match status" value="1"/>
</dbReference>
<dbReference type="Gene3D" id="2.60.40.420">
    <property type="entry name" value="Cupredoxins - blue copper proteins"/>
    <property type="match status" value="1"/>
</dbReference>
<dbReference type="InterPro" id="IPR045187">
    <property type="entry name" value="CcO_II"/>
</dbReference>
<dbReference type="InterPro" id="IPR002429">
    <property type="entry name" value="CcO_II-like_C"/>
</dbReference>
<dbReference type="InterPro" id="IPR034210">
    <property type="entry name" value="CcO_II_C"/>
</dbReference>
<dbReference type="InterPro" id="IPR001505">
    <property type="entry name" value="Copper_CuA"/>
</dbReference>
<dbReference type="InterPro" id="IPR008972">
    <property type="entry name" value="Cupredoxin"/>
</dbReference>
<dbReference type="InterPro" id="IPR014222">
    <property type="entry name" value="Cyt_c_oxidase_su2"/>
</dbReference>
<dbReference type="InterPro" id="IPR011759">
    <property type="entry name" value="Cyt_c_oxidase_su2_TM_dom"/>
</dbReference>
<dbReference type="InterPro" id="IPR036257">
    <property type="entry name" value="Cyt_c_oxidase_su2_TM_sf"/>
</dbReference>
<dbReference type="NCBIfam" id="TIGR02866">
    <property type="entry name" value="CoxB"/>
    <property type="match status" value="1"/>
</dbReference>
<dbReference type="PANTHER" id="PTHR22888:SF9">
    <property type="entry name" value="CYTOCHROME C OXIDASE SUBUNIT 2"/>
    <property type="match status" value="1"/>
</dbReference>
<dbReference type="PANTHER" id="PTHR22888">
    <property type="entry name" value="CYTOCHROME C OXIDASE, SUBUNIT II"/>
    <property type="match status" value="1"/>
</dbReference>
<dbReference type="Pfam" id="PF00116">
    <property type="entry name" value="COX2"/>
    <property type="match status" value="1"/>
</dbReference>
<dbReference type="Pfam" id="PF02790">
    <property type="entry name" value="COX2_TM"/>
    <property type="match status" value="1"/>
</dbReference>
<dbReference type="PRINTS" id="PR01166">
    <property type="entry name" value="CYCOXIDASEII"/>
</dbReference>
<dbReference type="SUPFAM" id="SSF49503">
    <property type="entry name" value="Cupredoxins"/>
    <property type="match status" value="1"/>
</dbReference>
<dbReference type="SUPFAM" id="SSF81464">
    <property type="entry name" value="Cytochrome c oxidase subunit II-like, transmembrane region"/>
    <property type="match status" value="1"/>
</dbReference>
<dbReference type="PROSITE" id="PS00078">
    <property type="entry name" value="COX2"/>
    <property type="match status" value="1"/>
</dbReference>
<dbReference type="PROSITE" id="PS50857">
    <property type="entry name" value="COX2_CUA"/>
    <property type="match status" value="1"/>
</dbReference>
<dbReference type="PROSITE" id="PS50999">
    <property type="entry name" value="COX2_TM"/>
    <property type="match status" value="1"/>
</dbReference>